<feature type="chain" id="PRO_0000372927" description="Matrix protein 2">
    <location>
        <begin position="1"/>
        <end position="97"/>
    </location>
</feature>
<feature type="topological domain" description="Virion surface" evidence="1">
    <location>
        <begin position="1"/>
        <end position="22"/>
    </location>
</feature>
<feature type="transmembrane region" description="Helical; Signal-anchor for type III membrane protein" evidence="1">
    <location>
        <begin position="23"/>
        <end position="43"/>
    </location>
</feature>
<feature type="topological domain" description="Intravirion" evidence="1">
    <location>
        <begin position="44"/>
        <end position="97"/>
    </location>
</feature>
<feature type="region of interest" description="Disordered" evidence="2">
    <location>
        <begin position="59"/>
        <end position="88"/>
    </location>
</feature>
<feature type="compositionally biased region" description="Basic and acidic residues" evidence="2">
    <location>
        <begin position="71"/>
        <end position="80"/>
    </location>
</feature>
<feature type="site" description="Essential for channel activity, possibly by being protonated during channel activation, and by forming the channel gate and the selective filter" evidence="1">
    <location>
        <position position="37"/>
    </location>
</feature>
<feature type="site" description="Seems to be involved in pH gating" evidence="1">
    <location>
        <position position="41"/>
    </location>
</feature>
<feature type="modified residue" description="Phosphoserine; by host" evidence="1">
    <location>
        <position position="64"/>
    </location>
</feature>
<feature type="modified residue" description="Phosphoserine; by host" evidence="1">
    <location>
        <position position="93"/>
    </location>
</feature>
<feature type="lipid moiety-binding region" description="S-palmitoyl cysteine; by host" evidence="1">
    <location>
        <position position="50"/>
    </location>
</feature>
<feature type="glycosylation site" description="N-linked (GlcNAc...) asparagine; by host" evidence="1">
    <location>
        <position position="20"/>
    </location>
</feature>
<feature type="disulfide bond" description="Interchain (with C-17)" evidence="1">
    <location>
        <position position="17"/>
    </location>
</feature>
<feature type="disulfide bond" description="Interchain (with C-19)" evidence="1">
    <location>
        <position position="19"/>
    </location>
</feature>
<dbReference type="EMBL" id="CY020454">
    <property type="protein sequence ID" value="ABO38364.1"/>
    <property type="molecule type" value="Viral_cRNA"/>
</dbReference>
<dbReference type="BMRB" id="A4GCJ8"/>
<dbReference type="SMR" id="A4GCJ8"/>
<dbReference type="GlyCosmos" id="A4GCJ8">
    <property type="glycosylation" value="1 site, No reported glycans"/>
</dbReference>
<dbReference type="Proteomes" id="UP000008580">
    <property type="component" value="Genome"/>
</dbReference>
<dbReference type="GO" id="GO:0020002">
    <property type="term" value="C:host cell plasma membrane"/>
    <property type="evidence" value="ECO:0007669"/>
    <property type="project" value="UniProtKB-SubCell"/>
</dbReference>
<dbReference type="GO" id="GO:0016020">
    <property type="term" value="C:membrane"/>
    <property type="evidence" value="ECO:0007669"/>
    <property type="project" value="UniProtKB-UniRule"/>
</dbReference>
<dbReference type="GO" id="GO:0055036">
    <property type="term" value="C:virion membrane"/>
    <property type="evidence" value="ECO:0007669"/>
    <property type="project" value="UniProtKB-SubCell"/>
</dbReference>
<dbReference type="GO" id="GO:0005216">
    <property type="term" value="F:monoatomic ion channel activity"/>
    <property type="evidence" value="ECO:0007669"/>
    <property type="project" value="UniProtKB-UniRule"/>
</dbReference>
<dbReference type="GO" id="GO:0015078">
    <property type="term" value="F:proton transmembrane transporter activity"/>
    <property type="evidence" value="ECO:0007669"/>
    <property type="project" value="UniProtKB-UniRule"/>
</dbReference>
<dbReference type="GO" id="GO:0051259">
    <property type="term" value="P:protein complex oligomerization"/>
    <property type="evidence" value="ECO:0007669"/>
    <property type="project" value="UniProtKB-UniRule"/>
</dbReference>
<dbReference type="GO" id="GO:0044694">
    <property type="term" value="P:symbiont genome entry into host cell via pore formation in plasma membrane"/>
    <property type="evidence" value="ECO:0007669"/>
    <property type="project" value="UniProtKB-UniRule"/>
</dbReference>
<dbReference type="GO" id="GO:0140321">
    <property type="term" value="P:symbiont-mediated suppression of host autophagy"/>
    <property type="evidence" value="ECO:0007669"/>
    <property type="project" value="UniProtKB-KW"/>
</dbReference>
<dbReference type="Gene3D" id="6.10.250.1640">
    <property type="match status" value="1"/>
</dbReference>
<dbReference type="HAMAP" id="MF_04069">
    <property type="entry name" value="INFV_M2"/>
    <property type="match status" value="1"/>
</dbReference>
<dbReference type="InterPro" id="IPR002089">
    <property type="entry name" value="Flu_M2"/>
</dbReference>
<dbReference type="Pfam" id="PF00599">
    <property type="entry name" value="Flu_M2"/>
    <property type="match status" value="1"/>
</dbReference>
<reference key="1">
    <citation type="submission" date="2007-03" db="EMBL/GenBank/DDBJ databases">
        <title>The NIAID influenza genome sequencing project.</title>
        <authorList>
            <person name="Ghedin E."/>
            <person name="Spiro D."/>
            <person name="Miller N."/>
            <person name="Zaborsky J."/>
            <person name="Feldblyum T."/>
            <person name="Subbu V."/>
            <person name="Shumway M."/>
            <person name="Sparenborg J."/>
            <person name="Groveman L."/>
            <person name="Halpin R."/>
            <person name="Sitz J."/>
            <person name="Koo H."/>
            <person name="Salzberg S.L."/>
            <person name="Webster R.G."/>
            <person name="Hoffmann E."/>
            <person name="Krauss S."/>
            <person name="Naeve C."/>
            <person name="Bao Y."/>
            <person name="Bolotov P."/>
            <person name="Dernovoy D."/>
            <person name="Kiryutin B."/>
            <person name="Lipman D.J."/>
            <person name="Tatusova T."/>
        </authorList>
    </citation>
    <scope>NUCLEOTIDE SEQUENCE [GENOMIC RNA]</scope>
</reference>
<reference key="2">
    <citation type="submission" date="2007-03" db="EMBL/GenBank/DDBJ databases">
        <authorList>
            <consortium name="The NIAID Influenza Genome Sequencing Consortium"/>
        </authorList>
    </citation>
    <scope>NUCLEOTIDE SEQUENCE [GENOMIC RNA]</scope>
</reference>
<sequence>MSLLTEVETPIRNEWGCRCNDSSDPLVVAASIIGILHLILWILDRLFFKCIYRLFKHGLKRGPSTEGVPESMREEYREEQQNAVDADDGHFVSIELE</sequence>
<organismHost>
    <name type="scientific">Aves</name>
    <dbReference type="NCBI Taxonomy" id="8782"/>
</organismHost>
<organismHost>
    <name type="scientific">Homo sapiens</name>
    <name type="common">Human</name>
    <dbReference type="NCBI Taxonomy" id="9606"/>
</organismHost>
<organismHost>
    <name type="scientific">Sus scrofa</name>
    <name type="common">Pig</name>
    <dbReference type="NCBI Taxonomy" id="9823"/>
</organismHost>
<organism>
    <name type="scientific">Influenza A virus (strain A/India/6263/1980 H1N1)</name>
    <dbReference type="NCBI Taxonomy" id="393562"/>
    <lineage>
        <taxon>Viruses</taxon>
        <taxon>Riboviria</taxon>
        <taxon>Orthornavirae</taxon>
        <taxon>Negarnaviricota</taxon>
        <taxon>Polyploviricotina</taxon>
        <taxon>Insthoviricetes</taxon>
        <taxon>Articulavirales</taxon>
        <taxon>Orthomyxoviridae</taxon>
        <taxon>Alphainfluenzavirus</taxon>
        <taxon>Alphainfluenzavirus influenzae</taxon>
        <taxon>Influenza A virus</taxon>
    </lineage>
</organism>
<protein>
    <recommendedName>
        <fullName evidence="1">Matrix protein 2</fullName>
    </recommendedName>
    <alternativeName>
        <fullName evidence="1">Proton channel protein M2</fullName>
    </alternativeName>
</protein>
<comment type="function">
    <text evidence="1">Forms a proton-selective ion channel that is necessary for the efficient release of the viral genome during virus entry. After attaching to the cell surface, the virion enters the cell by endocytosis. Acidification of the endosome triggers M2 ion channel activity. The influx of protons into virion interior is believed to disrupt interactions between the viral ribonucleoprotein (RNP), matrix protein 1 (M1), and lipid bilayers, thereby freeing the viral genome from interaction with viral proteins and enabling RNA segments to migrate to the host cell nucleus, where influenza virus RNA transcription and replication occur. Also plays a role in viral proteins secretory pathway. Elevates the intravesicular pH of normally acidic compartments, such as trans-Golgi network, preventing newly formed hemagglutinin from premature switching to the fusion-active conformation.</text>
</comment>
<comment type="activity regulation">
    <text>The M2 protein from most influenza A strains is inhibited by amantadine and rimantadine, resulting in viral uncoating incapacity. Emergence of amantadine-resistant variants is usually rapid.</text>
</comment>
<comment type="subunit">
    <text evidence="1">Homotetramer; composed of two disulfide-linked dimers held together by non-covalent interactions. May interact with matrix protein 1.</text>
</comment>
<comment type="subcellular location">
    <subcellularLocation>
        <location evidence="1">Virion membrane</location>
    </subcellularLocation>
    <subcellularLocation>
        <location evidence="1">Host apical cell membrane</location>
        <topology evidence="1">Single-pass type III membrane protein</topology>
    </subcellularLocation>
    <text evidence="1">Abundantly expressed at the apical plasma membrane in infected polarized epithelial cells, in close proximity to budding and assembled virions. Minor component of virions (only 16-20 molecules/virion).</text>
</comment>
<comment type="alternative products">
    <event type="alternative splicing"/>
    <isoform>
        <id>A4GCJ8-1</id>
        <name>M2</name>
        <sequence type="displayed"/>
    </isoform>
    <isoform>
        <id>A4GCJ9-1</id>
        <name>M1</name>
        <sequence type="external"/>
    </isoform>
    <text>Only the first 9 residues are shared by the 2 isoforms.</text>
</comment>
<comment type="domain">
    <text evidence="1">Cytoplasmic tail plays an important role in virion assembly and morphogenesis.</text>
</comment>
<comment type="miscellaneous">
    <text evidence="1">When the channel is activated, one or more imidazole moieties of His-37 probably become bi-protonated.</text>
</comment>
<comment type="similarity">
    <text evidence="1">Belongs to the influenza viruses matrix protein M2 family.</text>
</comment>
<evidence type="ECO:0000255" key="1">
    <source>
        <dbReference type="HAMAP-Rule" id="MF_04069"/>
    </source>
</evidence>
<evidence type="ECO:0000256" key="2">
    <source>
        <dbReference type="SAM" id="MobiDB-lite"/>
    </source>
</evidence>
<gene>
    <name evidence="1" type="primary">M</name>
    <name type="synonym">M2</name>
</gene>
<accession>A4GCJ8</accession>
<proteinExistence type="inferred from homology"/>
<keyword id="KW-0025">Alternative splicing</keyword>
<keyword id="KW-1015">Disulfide bond</keyword>
<keyword id="KW-0325">Glycoprotein</keyword>
<keyword id="KW-1032">Host cell membrane</keyword>
<keyword id="KW-1043">Host membrane</keyword>
<keyword id="KW-0945">Host-virus interaction</keyword>
<keyword id="KW-0375">Hydrogen ion transport</keyword>
<keyword id="KW-1083">Inhibition of host autophagy by virus</keyword>
<keyword id="KW-0407">Ion channel</keyword>
<keyword id="KW-0406">Ion transport</keyword>
<keyword id="KW-0449">Lipoprotein</keyword>
<keyword id="KW-0472">Membrane</keyword>
<keyword id="KW-0564">Palmitate</keyword>
<keyword id="KW-0597">Phosphoprotein</keyword>
<keyword id="KW-0735">Signal-anchor</keyword>
<keyword id="KW-0812">Transmembrane</keyword>
<keyword id="KW-1133">Transmembrane helix</keyword>
<keyword id="KW-0813">Transport</keyword>
<keyword id="KW-1182">Viral ion channel</keyword>
<keyword id="KW-0946">Virion</keyword>
<name>M2_I80AA</name>